<gene>
    <name type="ORF">70</name>
</gene>
<feature type="chain" id="PRO_0000141062" description="Thymidylate synthase">
    <location>
        <begin position="1"/>
        <end position="289"/>
    </location>
</feature>
<feature type="active site" description="Nucleophile" evidence="2">
    <location>
        <position position="171"/>
    </location>
</feature>
<feature type="binding site" description="in other chain" evidence="2">
    <location>
        <position position="26"/>
    </location>
    <ligand>
        <name>dUMP</name>
        <dbReference type="ChEBI" id="CHEBI:246422"/>
        <note>ligand shared between dimeric partners</note>
    </ligand>
</feature>
<feature type="binding site" evidence="2">
    <location>
        <begin position="151"/>
        <end position="152"/>
    </location>
    <ligand>
        <name>dUMP</name>
        <dbReference type="ChEBI" id="CHEBI:246422"/>
        <note>ligand shared between dimeric partners</note>
    </ligand>
</feature>
<feature type="binding site" description="in other chain" evidence="2">
    <location>
        <begin position="191"/>
        <end position="194"/>
    </location>
    <ligand>
        <name>dUMP</name>
        <dbReference type="ChEBI" id="CHEBI:246422"/>
        <note>ligand shared between dimeric partners</note>
    </ligand>
</feature>
<feature type="binding site" evidence="2">
    <location>
        <position position="194"/>
    </location>
    <ligand>
        <name>(6R)-5,10-methylene-5,6,7,8-tetrahydrofolate</name>
        <dbReference type="ChEBI" id="CHEBI:15636"/>
    </ligand>
</feature>
<feature type="binding site" description="in other chain" evidence="2">
    <location>
        <position position="202"/>
    </location>
    <ligand>
        <name>dUMP</name>
        <dbReference type="ChEBI" id="CHEBI:246422"/>
        <note>ligand shared between dimeric partners</note>
    </ligand>
</feature>
<feature type="binding site" description="in other chain" evidence="2">
    <location>
        <begin position="232"/>
        <end position="234"/>
    </location>
    <ligand>
        <name>dUMP</name>
        <dbReference type="ChEBI" id="CHEBI:246422"/>
        <note>ligand shared between dimeric partners</note>
    </ligand>
</feature>
<feature type="binding site" evidence="2">
    <location>
        <position position="288"/>
    </location>
    <ligand>
        <name>(6R)-5,10-methylene-5,6,7,8-tetrahydrofolate</name>
        <dbReference type="ChEBI" id="CHEBI:15636"/>
    </ligand>
</feature>
<accession>Q89940</accession>
<organismHost>
    <name type="scientific">Equus caballus</name>
    <name type="common">Horse</name>
    <dbReference type="NCBI Taxonomy" id="9796"/>
</organismHost>
<protein>
    <recommendedName>
        <fullName>Thymidylate synthase</fullName>
        <shortName>TS</shortName>
        <shortName>TSase</shortName>
        <ecNumber>2.1.1.45</ecNumber>
    </recommendedName>
</protein>
<sequence length="289" mass="32575">MVTHCEHQYLNTVREILANGVRRGDRTGVGTLSVFGDQAKYSLRGQFPLLTTKRVFWRGVLEELLWFIRGSTDSNELSARGVKIWDANGSRDFLARAGLGHREPGDLGPVYGFQWRHFGAAYVDSKTDYRGQGVDQLRDLIGEIKRNPESRRLVLTAWNPADLPAMALPPCHLLCQFYVAGGELSCQLYQRSGDMGLGVPFNIASYSLLTYMVAHLTGLEPGDFIHVLGDAHVYLNHVEPLKLQLTRSPRPFPRLRILRRVEDIDDFRAEDFALEGYHPHAAIPMEMAV</sequence>
<name>TYSY_EHV2</name>
<comment type="catalytic activity">
    <reaction>
        <text>dUMP + (6R)-5,10-methylene-5,6,7,8-tetrahydrofolate = 7,8-dihydrofolate + dTMP</text>
        <dbReference type="Rhea" id="RHEA:12104"/>
        <dbReference type="ChEBI" id="CHEBI:15636"/>
        <dbReference type="ChEBI" id="CHEBI:57451"/>
        <dbReference type="ChEBI" id="CHEBI:63528"/>
        <dbReference type="ChEBI" id="CHEBI:246422"/>
        <dbReference type="EC" id="2.1.1.45"/>
    </reaction>
</comment>
<comment type="pathway">
    <text>Pyrimidine metabolism; dTTP biosynthesis.</text>
</comment>
<comment type="subunit">
    <text evidence="1">Homodimer.</text>
</comment>
<comment type="similarity">
    <text evidence="3">Belongs to the thymidylate synthase family.</text>
</comment>
<proteinExistence type="inferred from homology"/>
<reference key="1">
    <citation type="journal article" date="1995" name="J. Mol. Biol.">
        <title>The DNA sequence of equine herpesvirus 2.</title>
        <authorList>
            <person name="Telford E.A.R."/>
            <person name="Watson M.S."/>
            <person name="Aird H.C."/>
            <person name="Perry J."/>
            <person name="Davison A.J."/>
        </authorList>
    </citation>
    <scope>NUCLEOTIDE SEQUENCE [LARGE SCALE GENOMIC DNA]</scope>
</reference>
<organism>
    <name type="scientific">Equine herpesvirus 2 (strain 86/87)</name>
    <name type="common">EHV-2</name>
    <dbReference type="NCBI Taxonomy" id="82831"/>
    <lineage>
        <taxon>Viruses</taxon>
        <taxon>Duplodnaviria</taxon>
        <taxon>Heunggongvirae</taxon>
        <taxon>Peploviricota</taxon>
        <taxon>Herviviricetes</taxon>
        <taxon>Herpesvirales</taxon>
        <taxon>Orthoherpesviridae</taxon>
        <taxon>Gammaherpesvirinae</taxon>
        <taxon>Percavirus</taxon>
        <taxon>Percavirus equidgamma2</taxon>
        <taxon>Equid gammaherpesvirus 2</taxon>
    </lineage>
</organism>
<keyword id="KW-0489">Methyltransferase</keyword>
<keyword id="KW-0545">Nucleotide biosynthesis</keyword>
<keyword id="KW-1185">Reference proteome</keyword>
<keyword id="KW-0808">Transferase</keyword>
<dbReference type="EC" id="2.1.1.45"/>
<dbReference type="EMBL" id="U20824">
    <property type="protein sequence ID" value="AAC13860.1"/>
    <property type="molecule type" value="Genomic_DNA"/>
</dbReference>
<dbReference type="PIR" id="S55667">
    <property type="entry name" value="S55667"/>
</dbReference>
<dbReference type="SMR" id="Q89940"/>
<dbReference type="KEGG" id="vg:1461026"/>
<dbReference type="UniPathway" id="UPA00575"/>
<dbReference type="Proteomes" id="UP000007083">
    <property type="component" value="Segment"/>
</dbReference>
<dbReference type="GO" id="GO:0004799">
    <property type="term" value="F:thymidylate synthase activity"/>
    <property type="evidence" value="ECO:0007669"/>
    <property type="project" value="UniProtKB-EC"/>
</dbReference>
<dbReference type="GO" id="GO:0006231">
    <property type="term" value="P:dTMP biosynthetic process"/>
    <property type="evidence" value="ECO:0007669"/>
    <property type="project" value="InterPro"/>
</dbReference>
<dbReference type="GO" id="GO:0006235">
    <property type="term" value="P:dTTP biosynthetic process"/>
    <property type="evidence" value="ECO:0007669"/>
    <property type="project" value="UniProtKB-UniPathway"/>
</dbReference>
<dbReference type="GO" id="GO:0032259">
    <property type="term" value="P:methylation"/>
    <property type="evidence" value="ECO:0007669"/>
    <property type="project" value="UniProtKB-KW"/>
</dbReference>
<dbReference type="CDD" id="cd00351">
    <property type="entry name" value="TS_Pyrimidine_HMase"/>
    <property type="match status" value="1"/>
</dbReference>
<dbReference type="FunFam" id="3.30.572.10:FF:000002">
    <property type="entry name" value="Possible thymidylate synthase"/>
    <property type="match status" value="1"/>
</dbReference>
<dbReference type="Gene3D" id="3.30.572.10">
    <property type="entry name" value="Thymidylate synthase/dCMP hydroxymethylase domain"/>
    <property type="match status" value="1"/>
</dbReference>
<dbReference type="HAMAP" id="MF_00008">
    <property type="entry name" value="Thymidy_synth_bact"/>
    <property type="match status" value="1"/>
</dbReference>
<dbReference type="InterPro" id="IPR045097">
    <property type="entry name" value="Thymidate_synth/dCMP_Mease"/>
</dbReference>
<dbReference type="InterPro" id="IPR023451">
    <property type="entry name" value="Thymidate_synth/dCMP_Mease_dom"/>
</dbReference>
<dbReference type="InterPro" id="IPR036926">
    <property type="entry name" value="Thymidate_synth/dCMP_Mease_sf"/>
</dbReference>
<dbReference type="InterPro" id="IPR000398">
    <property type="entry name" value="Thymidylate_synthase"/>
</dbReference>
<dbReference type="InterPro" id="IPR020940">
    <property type="entry name" value="Thymidylate_synthase_AS"/>
</dbReference>
<dbReference type="NCBIfam" id="NF002497">
    <property type="entry name" value="PRK01827.1-3"/>
    <property type="match status" value="1"/>
</dbReference>
<dbReference type="NCBIfam" id="TIGR03284">
    <property type="entry name" value="thym_sym"/>
    <property type="match status" value="1"/>
</dbReference>
<dbReference type="PANTHER" id="PTHR11548:SF2">
    <property type="entry name" value="THYMIDYLATE SYNTHASE"/>
    <property type="match status" value="1"/>
</dbReference>
<dbReference type="PANTHER" id="PTHR11548">
    <property type="entry name" value="THYMIDYLATE SYNTHASE 1"/>
    <property type="match status" value="1"/>
</dbReference>
<dbReference type="Pfam" id="PF00303">
    <property type="entry name" value="Thymidylat_synt"/>
    <property type="match status" value="1"/>
</dbReference>
<dbReference type="PRINTS" id="PR00108">
    <property type="entry name" value="THYMDSNTHASE"/>
</dbReference>
<dbReference type="SUPFAM" id="SSF55831">
    <property type="entry name" value="Thymidylate synthase/dCMP hydroxymethylase"/>
    <property type="match status" value="1"/>
</dbReference>
<dbReference type="PROSITE" id="PS00091">
    <property type="entry name" value="THYMIDYLATE_SYNTHASE"/>
    <property type="match status" value="1"/>
</dbReference>
<evidence type="ECO:0000250" key="1"/>
<evidence type="ECO:0000250" key="2">
    <source>
        <dbReference type="UniProtKB" id="P0A884"/>
    </source>
</evidence>
<evidence type="ECO:0000305" key="3"/>